<protein>
    <recommendedName>
        <fullName evidence="1">Xaa-Pro dipeptidyl-peptidase</fullName>
        <ecNumber evidence="1">3.4.14.11</ecNumber>
    </recommendedName>
    <alternativeName>
        <fullName evidence="1">X-Pro dipeptidyl-peptidase</fullName>
    </alternativeName>
    <alternativeName>
        <fullName evidence="1">X-prolyl-dipeptidyl aminopeptidase</fullName>
        <shortName evidence="1">X-PDAP</shortName>
    </alternativeName>
</protein>
<sequence>MKYNQYAYVETSPEKATEELLAINFLPENYSSLSFSELLAVLTGNVLAEATTRQAKDAKLAEFAVDDQTDLAAFLLDTPTAITASQFANVALQLLGYHPNYDYSLTDPLTCGEKHALPAFKDLTSKEELIFAFYRLLNTRSKNGQILLDVMAGKGYFTQFWGEGKFMLFNGKSLPVFDTSQVIREVVYVQSDLDTDGDGKGDLLPVTIFRPVESQDQLKVPALYTASPYFGGIIDNVKTNHNVDENLTDATTWTNPKYVAKPLVKSPAPSGQDVPATELATGQSSYGLNEYLLARGFASVFSGAIGNRHGDGIRITGSPEETISQKEVIEWLTGDRVAYTDRTRRFETKASWCSGNVGMTGRSYLGTLQIAIATTGVKGLKTVVSEAAISSWYDYYREHGLVIAPSECQGEDMDKLAEVCQSNLWDGGNFTAKKAYEAEQAELLAAQDRATGQYSDFWESRNYRHHADGIKCSWISVHGLNDWNVKPKNVYKIWQKVKQLPVESHLFLHQGPHYNMNNLVSIDFTDLMNLWFVHELLEVENGAYEQWPKVMIQDNLEADKWHAESDWANDLGQASLYSPTADGYLSTVENGTGQLTFTDLGGTEFKKAGISETDWEYQFISGEKKWAKASLRFESEEFLHPTTLVGRPKVQVRVAANKTVGQLSVALVDLGTRQRLTATPKIFARGNQPFGYRFEADSLQEFVPDKATKAKLITKAHMNLQNYQDMKQPSKLEAGQFVDLEFELQPTYYTLPAGAKLCLIIYSTDQGMTKRPLETEDYTVDLAGTALLLYRK</sequence>
<evidence type="ECO:0000255" key="1">
    <source>
        <dbReference type="HAMAP-Rule" id="MF_00698"/>
    </source>
</evidence>
<gene>
    <name evidence="1" type="primary">pepX</name>
    <name type="ordered locus">LBUL_1351</name>
</gene>
<organism>
    <name type="scientific">Lactobacillus delbrueckii subsp. bulgaricus (strain ATCC BAA-365 / Lb-18)</name>
    <dbReference type="NCBI Taxonomy" id="321956"/>
    <lineage>
        <taxon>Bacteria</taxon>
        <taxon>Bacillati</taxon>
        <taxon>Bacillota</taxon>
        <taxon>Bacilli</taxon>
        <taxon>Lactobacillales</taxon>
        <taxon>Lactobacillaceae</taxon>
        <taxon>Lactobacillus</taxon>
    </lineage>
</organism>
<comment type="function">
    <text evidence="1">Removes N-terminal dipeptides sequentially from polypeptides having unsubstituted N-termini provided that the penultimate residue is proline.</text>
</comment>
<comment type="catalytic activity">
    <reaction evidence="1">
        <text>Hydrolyzes Xaa-Pro-|- bonds to release unblocked, N-terminal dipeptides from substrates including Ala-Pro-|-p-nitroanilide and (sequentially) Tyr-Pro-|-Phe-Pro-|-Gly-Pro-|-Ile.</text>
        <dbReference type="EC" id="3.4.14.11"/>
    </reaction>
</comment>
<comment type="subunit">
    <text evidence="1">Homodimer.</text>
</comment>
<comment type="subcellular location">
    <subcellularLocation>
        <location evidence="1">Cytoplasm</location>
    </subcellularLocation>
</comment>
<comment type="similarity">
    <text evidence="1">Belongs to the peptidase S15 family.</text>
</comment>
<keyword id="KW-0031">Aminopeptidase</keyword>
<keyword id="KW-0963">Cytoplasm</keyword>
<keyword id="KW-0378">Hydrolase</keyword>
<keyword id="KW-0645">Protease</keyword>
<keyword id="KW-0720">Serine protease</keyword>
<feature type="chain" id="PRO_1000045481" description="Xaa-Pro dipeptidyl-peptidase">
    <location>
        <begin position="1"/>
        <end position="792"/>
    </location>
</feature>
<feature type="active site" description="Charge relay system" evidence="1">
    <location>
        <position position="363"/>
    </location>
</feature>
<feature type="active site" description="Charge relay system" evidence="1">
    <location>
        <position position="482"/>
    </location>
</feature>
<feature type="active site" description="Charge relay system" evidence="1">
    <location>
        <position position="513"/>
    </location>
</feature>
<proteinExistence type="inferred from homology"/>
<accession>Q049K4</accession>
<dbReference type="EC" id="3.4.14.11" evidence="1"/>
<dbReference type="EMBL" id="CP000412">
    <property type="protein sequence ID" value="ABJ58868.1"/>
    <property type="molecule type" value="Genomic_DNA"/>
</dbReference>
<dbReference type="RefSeq" id="WP_003618390.1">
    <property type="nucleotide sequence ID" value="NC_008529.1"/>
</dbReference>
<dbReference type="SMR" id="Q049K4"/>
<dbReference type="ESTHER" id="lacdl-pepx">
    <property type="family name" value="Lactobacillus_peptidase"/>
</dbReference>
<dbReference type="MEROPS" id="S15.001"/>
<dbReference type="KEGG" id="lbu:LBUL_1351"/>
<dbReference type="HOGENOM" id="CLU_011800_0_0_9"/>
<dbReference type="BioCyc" id="LDEL321956:LBUL_RS06370-MONOMER"/>
<dbReference type="GO" id="GO:0005737">
    <property type="term" value="C:cytoplasm"/>
    <property type="evidence" value="ECO:0007669"/>
    <property type="project" value="UniProtKB-SubCell"/>
</dbReference>
<dbReference type="GO" id="GO:0004177">
    <property type="term" value="F:aminopeptidase activity"/>
    <property type="evidence" value="ECO:0007669"/>
    <property type="project" value="UniProtKB-KW"/>
</dbReference>
<dbReference type="GO" id="GO:0008239">
    <property type="term" value="F:dipeptidyl-peptidase activity"/>
    <property type="evidence" value="ECO:0007669"/>
    <property type="project" value="UniProtKB-UniRule"/>
</dbReference>
<dbReference type="GO" id="GO:0008236">
    <property type="term" value="F:serine-type peptidase activity"/>
    <property type="evidence" value="ECO:0007669"/>
    <property type="project" value="UniProtKB-KW"/>
</dbReference>
<dbReference type="GO" id="GO:0006508">
    <property type="term" value="P:proteolysis"/>
    <property type="evidence" value="ECO:0007669"/>
    <property type="project" value="UniProtKB-KW"/>
</dbReference>
<dbReference type="Gene3D" id="1.10.246.70">
    <property type="match status" value="1"/>
</dbReference>
<dbReference type="Gene3D" id="3.40.50.1820">
    <property type="entry name" value="alpha/beta hydrolase"/>
    <property type="match status" value="1"/>
</dbReference>
<dbReference type="Gene3D" id="2.60.120.260">
    <property type="entry name" value="Galactose-binding domain-like"/>
    <property type="match status" value="1"/>
</dbReference>
<dbReference type="HAMAP" id="MF_00698">
    <property type="entry name" value="Aminopeptidase_S15"/>
    <property type="match status" value="1"/>
</dbReference>
<dbReference type="InterPro" id="IPR029058">
    <property type="entry name" value="AB_hydrolase_fold"/>
</dbReference>
<dbReference type="InterPro" id="IPR008979">
    <property type="entry name" value="Galactose-bd-like_sf"/>
</dbReference>
<dbReference type="InterPro" id="IPR008252">
    <property type="entry name" value="Pept_S15_Xpro"/>
</dbReference>
<dbReference type="InterPro" id="IPR015251">
    <property type="entry name" value="PepX_N_dom"/>
</dbReference>
<dbReference type="InterPro" id="IPR036313">
    <property type="entry name" value="PepX_N_dom_sf"/>
</dbReference>
<dbReference type="InterPro" id="IPR000383">
    <property type="entry name" value="Xaa-Pro-like_dom"/>
</dbReference>
<dbReference type="InterPro" id="IPR013736">
    <property type="entry name" value="Xaa-Pro_dipept_C"/>
</dbReference>
<dbReference type="NCBIfam" id="NF003781">
    <property type="entry name" value="PRK05371.1-2"/>
    <property type="match status" value="1"/>
</dbReference>
<dbReference type="Pfam" id="PF02129">
    <property type="entry name" value="Peptidase_S15"/>
    <property type="match status" value="1"/>
</dbReference>
<dbReference type="Pfam" id="PF08530">
    <property type="entry name" value="PepX_C"/>
    <property type="match status" value="1"/>
</dbReference>
<dbReference type="Pfam" id="PF09168">
    <property type="entry name" value="PepX_N"/>
    <property type="match status" value="1"/>
</dbReference>
<dbReference type="PRINTS" id="PR00923">
    <property type="entry name" value="LACTOPTASE"/>
</dbReference>
<dbReference type="SMART" id="SM00939">
    <property type="entry name" value="PepX_C"/>
    <property type="match status" value="1"/>
</dbReference>
<dbReference type="SMART" id="SM00940">
    <property type="entry name" value="PepX_N"/>
    <property type="match status" value="1"/>
</dbReference>
<dbReference type="SUPFAM" id="SSF53474">
    <property type="entry name" value="alpha/beta-Hydrolases"/>
    <property type="match status" value="1"/>
</dbReference>
<dbReference type="SUPFAM" id="SSF49785">
    <property type="entry name" value="Galactose-binding domain-like"/>
    <property type="match status" value="1"/>
</dbReference>
<dbReference type="SUPFAM" id="SSF81761">
    <property type="entry name" value="X-Prolyl dipeptidyl aminopeptidase PepX, N-terminal domain"/>
    <property type="match status" value="1"/>
</dbReference>
<reference key="1">
    <citation type="journal article" date="2006" name="Proc. Natl. Acad. Sci. U.S.A.">
        <title>Comparative genomics of the lactic acid bacteria.</title>
        <authorList>
            <person name="Makarova K.S."/>
            <person name="Slesarev A."/>
            <person name="Wolf Y.I."/>
            <person name="Sorokin A."/>
            <person name="Mirkin B."/>
            <person name="Koonin E.V."/>
            <person name="Pavlov A."/>
            <person name="Pavlova N."/>
            <person name="Karamychev V."/>
            <person name="Polouchine N."/>
            <person name="Shakhova V."/>
            <person name="Grigoriev I."/>
            <person name="Lou Y."/>
            <person name="Rohksar D."/>
            <person name="Lucas S."/>
            <person name="Huang K."/>
            <person name="Goodstein D.M."/>
            <person name="Hawkins T."/>
            <person name="Plengvidhya V."/>
            <person name="Welker D."/>
            <person name="Hughes J."/>
            <person name="Goh Y."/>
            <person name="Benson A."/>
            <person name="Baldwin K."/>
            <person name="Lee J.-H."/>
            <person name="Diaz-Muniz I."/>
            <person name="Dosti B."/>
            <person name="Smeianov V."/>
            <person name="Wechter W."/>
            <person name="Barabote R."/>
            <person name="Lorca G."/>
            <person name="Altermann E."/>
            <person name="Barrangou R."/>
            <person name="Ganesan B."/>
            <person name="Xie Y."/>
            <person name="Rawsthorne H."/>
            <person name="Tamir D."/>
            <person name="Parker C."/>
            <person name="Breidt F."/>
            <person name="Broadbent J.R."/>
            <person name="Hutkins R."/>
            <person name="O'Sullivan D."/>
            <person name="Steele J."/>
            <person name="Unlu G."/>
            <person name="Saier M.H. Jr."/>
            <person name="Klaenhammer T."/>
            <person name="Richardson P."/>
            <person name="Kozyavkin S."/>
            <person name="Weimer B.C."/>
            <person name="Mills D.A."/>
        </authorList>
    </citation>
    <scope>NUCLEOTIDE SEQUENCE [LARGE SCALE GENOMIC DNA]</scope>
    <source>
        <strain>ATCC BAA-365 / Lb-18</strain>
    </source>
</reference>
<name>PEPX_LACDB</name>